<reference key="1">
    <citation type="submission" date="2006-01" db="EMBL/GenBank/DDBJ databases">
        <title>Complete sequence of Rhodopseudomonas palustris HaA2.</title>
        <authorList>
            <consortium name="US DOE Joint Genome Institute"/>
            <person name="Copeland A."/>
            <person name="Lucas S."/>
            <person name="Lapidus A."/>
            <person name="Barry K."/>
            <person name="Detter J.C."/>
            <person name="Glavina T."/>
            <person name="Hammon N."/>
            <person name="Israni S."/>
            <person name="Pitluck S."/>
            <person name="Chain P."/>
            <person name="Malfatti S."/>
            <person name="Shin M."/>
            <person name="Vergez L."/>
            <person name="Schmutz J."/>
            <person name="Larimer F."/>
            <person name="Land M."/>
            <person name="Hauser L."/>
            <person name="Pelletier D.A."/>
            <person name="Kyrpides N."/>
            <person name="Anderson I."/>
            <person name="Oda Y."/>
            <person name="Harwood C.S."/>
            <person name="Richardson P."/>
        </authorList>
    </citation>
    <scope>NUCLEOTIDE SEQUENCE [LARGE SCALE GENOMIC DNA]</scope>
    <source>
        <strain>HaA2</strain>
    </source>
</reference>
<keyword id="KW-0067">ATP-binding</keyword>
<keyword id="KW-0963">Cytoplasm</keyword>
<keyword id="KW-0227">DNA damage</keyword>
<keyword id="KW-0233">DNA recombination</keyword>
<keyword id="KW-0234">DNA repair</keyword>
<keyword id="KW-0238">DNA-binding</keyword>
<keyword id="KW-0378">Hydrolase</keyword>
<keyword id="KW-0547">Nucleotide-binding</keyword>
<keyword id="KW-1185">Reference proteome</keyword>
<comment type="function">
    <text evidence="1">The RuvA-RuvB-RuvC complex processes Holliday junction (HJ) DNA during genetic recombination and DNA repair, while the RuvA-RuvB complex plays an important role in the rescue of blocked DNA replication forks via replication fork reversal (RFR). RuvA specifically binds to HJ cruciform DNA, conferring on it an open structure. The RuvB hexamer acts as an ATP-dependent pump, pulling dsDNA into and through the RuvAB complex. RuvB forms 2 homohexamers on either side of HJ DNA bound by 1 or 2 RuvA tetramers; 4 subunits per hexamer contact DNA at a time. Coordinated motions by a converter formed by DNA-disengaged RuvB subunits stimulates ATP hydrolysis and nucleotide exchange. Immobilization of the converter enables RuvB to convert the ATP-contained energy into a lever motion, pulling 2 nucleotides of DNA out of the RuvA tetramer per ATP hydrolyzed, thus driving DNA branch migration. The RuvB motors rotate together with the DNA substrate, which together with the progressing nucleotide cycle form the mechanistic basis for DNA recombination by continuous HJ branch migration. Branch migration allows RuvC to scan DNA until it finds its consensus sequence, where it cleaves and resolves cruciform DNA.</text>
</comment>
<comment type="catalytic activity">
    <reaction evidence="1">
        <text>ATP + H2O = ADP + phosphate + H(+)</text>
        <dbReference type="Rhea" id="RHEA:13065"/>
        <dbReference type="ChEBI" id="CHEBI:15377"/>
        <dbReference type="ChEBI" id="CHEBI:15378"/>
        <dbReference type="ChEBI" id="CHEBI:30616"/>
        <dbReference type="ChEBI" id="CHEBI:43474"/>
        <dbReference type="ChEBI" id="CHEBI:456216"/>
    </reaction>
</comment>
<comment type="subunit">
    <text evidence="1">Homohexamer. Forms an RuvA(8)-RuvB(12)-Holliday junction (HJ) complex. HJ DNA is sandwiched between 2 RuvA tetramers; dsDNA enters through RuvA and exits via RuvB. An RuvB hexamer assembles on each DNA strand where it exits the tetramer. Each RuvB hexamer is contacted by two RuvA subunits (via domain III) on 2 adjacent RuvB subunits; this complex drives branch migration. In the full resolvosome a probable DNA-RuvA(4)-RuvB(12)-RuvC(2) complex forms which resolves the HJ.</text>
</comment>
<comment type="subcellular location">
    <subcellularLocation>
        <location evidence="1">Cytoplasm</location>
    </subcellularLocation>
</comment>
<comment type="domain">
    <text evidence="1">Has 3 domains, the large (RuvB-L) and small ATPase (RuvB-S) domains and the C-terminal head (RuvB-H) domain. The head domain binds DNA, while the ATPase domains jointly bind ATP, ADP or are empty depending on the state of the subunit in the translocation cycle. During a single DNA translocation step the structure of each domain remains the same, but their relative positions change.</text>
</comment>
<comment type="similarity">
    <text evidence="1">Belongs to the RuvB family.</text>
</comment>
<protein>
    <recommendedName>
        <fullName evidence="1">Holliday junction branch migration complex subunit RuvB</fullName>
        <ecNumber evidence="1">3.6.4.-</ecNumber>
    </recommendedName>
</protein>
<sequence length="348" mass="37619">MTDPSRLVTPERRGDDLGDAALRPQNLSEFVGQEKARANLQVFIDAARKRKEALDHVLFVGPPGLGKTTLAQIVARELGVGFRATSGPVIAKAGDLAALLTNLEERDVLFIDEIHRLSPAVEEVLYPAMEDFQLDLIIGEGPAARSVKIELSKFTLVGATTRAGLLTNPLRDRFGIPVRLNFYTIEELESIVSRGARVLGTGITADGANEIARRARGTPRIAGRLLRRVRDFASAADAEAIDRKIADHALGALEVDAAGLDAMDRRYLSTIALNYGGGPVGVETMAAALSEPRDAIEDIIEPYLIQCGYLQRTPRGRLLTPHAFKHLGLAEPSREPGQFGLFGGEEEA</sequence>
<feature type="chain" id="PRO_1000001458" description="Holliday junction branch migration complex subunit RuvB">
    <location>
        <begin position="1"/>
        <end position="348"/>
    </location>
</feature>
<feature type="region of interest" description="Large ATPase domain (RuvB-L)" evidence="1">
    <location>
        <begin position="1"/>
        <end position="183"/>
    </location>
</feature>
<feature type="region of interest" description="Small ATPAse domain (RuvB-S)" evidence="1">
    <location>
        <begin position="184"/>
        <end position="254"/>
    </location>
</feature>
<feature type="region of interest" description="Head domain (RuvB-H)" evidence="1">
    <location>
        <begin position="257"/>
        <end position="348"/>
    </location>
</feature>
<feature type="binding site" evidence="1">
    <location>
        <position position="22"/>
    </location>
    <ligand>
        <name>ATP</name>
        <dbReference type="ChEBI" id="CHEBI:30616"/>
    </ligand>
</feature>
<feature type="binding site" evidence="1">
    <location>
        <position position="23"/>
    </location>
    <ligand>
        <name>ATP</name>
        <dbReference type="ChEBI" id="CHEBI:30616"/>
    </ligand>
</feature>
<feature type="binding site" evidence="1">
    <location>
        <position position="64"/>
    </location>
    <ligand>
        <name>ATP</name>
        <dbReference type="ChEBI" id="CHEBI:30616"/>
    </ligand>
</feature>
<feature type="binding site" evidence="1">
    <location>
        <position position="67"/>
    </location>
    <ligand>
        <name>ATP</name>
        <dbReference type="ChEBI" id="CHEBI:30616"/>
    </ligand>
</feature>
<feature type="binding site" evidence="1">
    <location>
        <position position="68"/>
    </location>
    <ligand>
        <name>ATP</name>
        <dbReference type="ChEBI" id="CHEBI:30616"/>
    </ligand>
</feature>
<feature type="binding site" evidence="1">
    <location>
        <position position="68"/>
    </location>
    <ligand>
        <name>Mg(2+)</name>
        <dbReference type="ChEBI" id="CHEBI:18420"/>
    </ligand>
</feature>
<feature type="binding site" evidence="1">
    <location>
        <position position="69"/>
    </location>
    <ligand>
        <name>ATP</name>
        <dbReference type="ChEBI" id="CHEBI:30616"/>
    </ligand>
</feature>
<feature type="binding site" evidence="1">
    <location>
        <begin position="130"/>
        <end position="132"/>
    </location>
    <ligand>
        <name>ATP</name>
        <dbReference type="ChEBI" id="CHEBI:30616"/>
    </ligand>
</feature>
<feature type="binding site" evidence="1">
    <location>
        <position position="173"/>
    </location>
    <ligand>
        <name>ATP</name>
        <dbReference type="ChEBI" id="CHEBI:30616"/>
    </ligand>
</feature>
<feature type="binding site" evidence="1">
    <location>
        <position position="183"/>
    </location>
    <ligand>
        <name>ATP</name>
        <dbReference type="ChEBI" id="CHEBI:30616"/>
    </ligand>
</feature>
<feature type="binding site" evidence="1">
    <location>
        <position position="220"/>
    </location>
    <ligand>
        <name>ATP</name>
        <dbReference type="ChEBI" id="CHEBI:30616"/>
    </ligand>
</feature>
<feature type="binding site" evidence="1">
    <location>
        <position position="293"/>
    </location>
    <ligand>
        <name>DNA</name>
        <dbReference type="ChEBI" id="CHEBI:16991"/>
    </ligand>
</feature>
<feature type="binding site" evidence="1">
    <location>
        <position position="312"/>
    </location>
    <ligand>
        <name>DNA</name>
        <dbReference type="ChEBI" id="CHEBI:16991"/>
    </ligand>
</feature>
<feature type="binding site" evidence="1">
    <location>
        <position position="317"/>
    </location>
    <ligand>
        <name>DNA</name>
        <dbReference type="ChEBI" id="CHEBI:16991"/>
    </ligand>
</feature>
<dbReference type="EC" id="3.6.4.-" evidence="1"/>
<dbReference type="EMBL" id="CP000250">
    <property type="protein sequence ID" value="ABD08957.1"/>
    <property type="molecule type" value="Genomic_DNA"/>
</dbReference>
<dbReference type="RefSeq" id="WP_011443141.1">
    <property type="nucleotide sequence ID" value="NC_007778.1"/>
</dbReference>
<dbReference type="SMR" id="Q2IS53"/>
<dbReference type="STRING" id="316058.RPB_4269"/>
<dbReference type="KEGG" id="rpb:RPB_4269"/>
<dbReference type="eggNOG" id="COG2255">
    <property type="taxonomic scope" value="Bacteria"/>
</dbReference>
<dbReference type="HOGENOM" id="CLU_055599_1_0_5"/>
<dbReference type="OrthoDB" id="9804478at2"/>
<dbReference type="Proteomes" id="UP000008809">
    <property type="component" value="Chromosome"/>
</dbReference>
<dbReference type="GO" id="GO:0005737">
    <property type="term" value="C:cytoplasm"/>
    <property type="evidence" value="ECO:0007669"/>
    <property type="project" value="UniProtKB-SubCell"/>
</dbReference>
<dbReference type="GO" id="GO:0048476">
    <property type="term" value="C:Holliday junction resolvase complex"/>
    <property type="evidence" value="ECO:0007669"/>
    <property type="project" value="UniProtKB-UniRule"/>
</dbReference>
<dbReference type="GO" id="GO:0005524">
    <property type="term" value="F:ATP binding"/>
    <property type="evidence" value="ECO:0007669"/>
    <property type="project" value="UniProtKB-UniRule"/>
</dbReference>
<dbReference type="GO" id="GO:0016887">
    <property type="term" value="F:ATP hydrolysis activity"/>
    <property type="evidence" value="ECO:0007669"/>
    <property type="project" value="InterPro"/>
</dbReference>
<dbReference type="GO" id="GO:0000400">
    <property type="term" value="F:four-way junction DNA binding"/>
    <property type="evidence" value="ECO:0007669"/>
    <property type="project" value="UniProtKB-UniRule"/>
</dbReference>
<dbReference type="GO" id="GO:0009378">
    <property type="term" value="F:four-way junction helicase activity"/>
    <property type="evidence" value="ECO:0007669"/>
    <property type="project" value="InterPro"/>
</dbReference>
<dbReference type="GO" id="GO:0006310">
    <property type="term" value="P:DNA recombination"/>
    <property type="evidence" value="ECO:0007669"/>
    <property type="project" value="UniProtKB-UniRule"/>
</dbReference>
<dbReference type="GO" id="GO:0006281">
    <property type="term" value="P:DNA repair"/>
    <property type="evidence" value="ECO:0007669"/>
    <property type="project" value="UniProtKB-UniRule"/>
</dbReference>
<dbReference type="CDD" id="cd00009">
    <property type="entry name" value="AAA"/>
    <property type="match status" value="1"/>
</dbReference>
<dbReference type="Gene3D" id="1.10.8.60">
    <property type="match status" value="1"/>
</dbReference>
<dbReference type="Gene3D" id="3.40.50.300">
    <property type="entry name" value="P-loop containing nucleotide triphosphate hydrolases"/>
    <property type="match status" value="1"/>
</dbReference>
<dbReference type="Gene3D" id="1.10.10.10">
    <property type="entry name" value="Winged helix-like DNA-binding domain superfamily/Winged helix DNA-binding domain"/>
    <property type="match status" value="1"/>
</dbReference>
<dbReference type="HAMAP" id="MF_00016">
    <property type="entry name" value="DNA_HJ_migration_RuvB"/>
    <property type="match status" value="1"/>
</dbReference>
<dbReference type="InterPro" id="IPR003593">
    <property type="entry name" value="AAA+_ATPase"/>
</dbReference>
<dbReference type="InterPro" id="IPR041445">
    <property type="entry name" value="AAA_lid_4"/>
</dbReference>
<dbReference type="InterPro" id="IPR004605">
    <property type="entry name" value="DNA_helicase_Holl-junc_RuvB"/>
</dbReference>
<dbReference type="InterPro" id="IPR027417">
    <property type="entry name" value="P-loop_NTPase"/>
</dbReference>
<dbReference type="InterPro" id="IPR008824">
    <property type="entry name" value="RuvB-like_N"/>
</dbReference>
<dbReference type="InterPro" id="IPR008823">
    <property type="entry name" value="RuvB_C"/>
</dbReference>
<dbReference type="InterPro" id="IPR036388">
    <property type="entry name" value="WH-like_DNA-bd_sf"/>
</dbReference>
<dbReference type="InterPro" id="IPR036390">
    <property type="entry name" value="WH_DNA-bd_sf"/>
</dbReference>
<dbReference type="NCBIfam" id="NF000868">
    <property type="entry name" value="PRK00080.1"/>
    <property type="match status" value="1"/>
</dbReference>
<dbReference type="NCBIfam" id="TIGR00635">
    <property type="entry name" value="ruvB"/>
    <property type="match status" value="1"/>
</dbReference>
<dbReference type="PANTHER" id="PTHR42848">
    <property type="match status" value="1"/>
</dbReference>
<dbReference type="PANTHER" id="PTHR42848:SF1">
    <property type="entry name" value="HOLLIDAY JUNCTION BRANCH MIGRATION COMPLEX SUBUNIT RUVB"/>
    <property type="match status" value="1"/>
</dbReference>
<dbReference type="Pfam" id="PF17864">
    <property type="entry name" value="AAA_lid_4"/>
    <property type="match status" value="1"/>
</dbReference>
<dbReference type="Pfam" id="PF05491">
    <property type="entry name" value="RuvB_C"/>
    <property type="match status" value="1"/>
</dbReference>
<dbReference type="Pfam" id="PF05496">
    <property type="entry name" value="RuvB_N"/>
    <property type="match status" value="1"/>
</dbReference>
<dbReference type="SMART" id="SM00382">
    <property type="entry name" value="AAA"/>
    <property type="match status" value="1"/>
</dbReference>
<dbReference type="SUPFAM" id="SSF52540">
    <property type="entry name" value="P-loop containing nucleoside triphosphate hydrolases"/>
    <property type="match status" value="1"/>
</dbReference>
<dbReference type="SUPFAM" id="SSF46785">
    <property type="entry name" value="Winged helix' DNA-binding domain"/>
    <property type="match status" value="1"/>
</dbReference>
<organism>
    <name type="scientific">Rhodopseudomonas palustris (strain HaA2)</name>
    <dbReference type="NCBI Taxonomy" id="316058"/>
    <lineage>
        <taxon>Bacteria</taxon>
        <taxon>Pseudomonadati</taxon>
        <taxon>Pseudomonadota</taxon>
        <taxon>Alphaproteobacteria</taxon>
        <taxon>Hyphomicrobiales</taxon>
        <taxon>Nitrobacteraceae</taxon>
        <taxon>Rhodopseudomonas</taxon>
    </lineage>
</organism>
<evidence type="ECO:0000255" key="1">
    <source>
        <dbReference type="HAMAP-Rule" id="MF_00016"/>
    </source>
</evidence>
<proteinExistence type="inferred from homology"/>
<gene>
    <name evidence="1" type="primary">ruvB</name>
    <name type="ordered locus">RPB_4269</name>
</gene>
<accession>Q2IS53</accession>
<name>RUVB_RHOP2</name>